<dbReference type="EMBL" id="CP000437">
    <property type="protein sequence ID" value="ABI82246.1"/>
    <property type="molecule type" value="Genomic_DNA"/>
</dbReference>
<dbReference type="RefSeq" id="WP_003017693.1">
    <property type="nucleotide sequence ID" value="NC_017463.1"/>
</dbReference>
<dbReference type="SMR" id="Q0BNT8"/>
<dbReference type="KEGG" id="fth:FTH_0220"/>
<dbReference type="GO" id="GO:0005737">
    <property type="term" value="C:cytoplasm"/>
    <property type="evidence" value="ECO:0007669"/>
    <property type="project" value="UniProtKB-SubCell"/>
</dbReference>
<dbReference type="GO" id="GO:0003746">
    <property type="term" value="F:translation elongation factor activity"/>
    <property type="evidence" value="ECO:0007669"/>
    <property type="project" value="UniProtKB-UniRule"/>
</dbReference>
<dbReference type="CDD" id="cd14275">
    <property type="entry name" value="UBA_EF-Ts"/>
    <property type="match status" value="1"/>
</dbReference>
<dbReference type="FunFam" id="1.10.286.20:FF:000001">
    <property type="entry name" value="Elongation factor Ts"/>
    <property type="match status" value="1"/>
</dbReference>
<dbReference type="FunFam" id="1.10.8.10:FF:000001">
    <property type="entry name" value="Elongation factor Ts"/>
    <property type="match status" value="1"/>
</dbReference>
<dbReference type="Gene3D" id="1.10.286.20">
    <property type="match status" value="1"/>
</dbReference>
<dbReference type="Gene3D" id="1.10.8.10">
    <property type="entry name" value="DNA helicase RuvA subunit, C-terminal domain"/>
    <property type="match status" value="1"/>
</dbReference>
<dbReference type="Gene3D" id="3.30.479.20">
    <property type="entry name" value="Elongation factor Ts, dimerisation domain"/>
    <property type="match status" value="2"/>
</dbReference>
<dbReference type="HAMAP" id="MF_00050">
    <property type="entry name" value="EF_Ts"/>
    <property type="match status" value="1"/>
</dbReference>
<dbReference type="InterPro" id="IPR036402">
    <property type="entry name" value="EF-Ts_dimer_sf"/>
</dbReference>
<dbReference type="InterPro" id="IPR001816">
    <property type="entry name" value="Transl_elong_EFTs/EF1B"/>
</dbReference>
<dbReference type="InterPro" id="IPR014039">
    <property type="entry name" value="Transl_elong_EFTs/EF1B_dimer"/>
</dbReference>
<dbReference type="InterPro" id="IPR018101">
    <property type="entry name" value="Transl_elong_Ts_CS"/>
</dbReference>
<dbReference type="InterPro" id="IPR009060">
    <property type="entry name" value="UBA-like_sf"/>
</dbReference>
<dbReference type="NCBIfam" id="TIGR00116">
    <property type="entry name" value="tsf"/>
    <property type="match status" value="1"/>
</dbReference>
<dbReference type="PANTHER" id="PTHR11741">
    <property type="entry name" value="ELONGATION FACTOR TS"/>
    <property type="match status" value="1"/>
</dbReference>
<dbReference type="PANTHER" id="PTHR11741:SF0">
    <property type="entry name" value="ELONGATION FACTOR TS, MITOCHONDRIAL"/>
    <property type="match status" value="1"/>
</dbReference>
<dbReference type="Pfam" id="PF00889">
    <property type="entry name" value="EF_TS"/>
    <property type="match status" value="1"/>
</dbReference>
<dbReference type="SUPFAM" id="SSF54713">
    <property type="entry name" value="Elongation factor Ts (EF-Ts), dimerisation domain"/>
    <property type="match status" value="2"/>
</dbReference>
<dbReference type="SUPFAM" id="SSF46934">
    <property type="entry name" value="UBA-like"/>
    <property type="match status" value="1"/>
</dbReference>
<dbReference type="PROSITE" id="PS01126">
    <property type="entry name" value="EF_TS_1"/>
    <property type="match status" value="1"/>
</dbReference>
<dbReference type="PROSITE" id="PS01127">
    <property type="entry name" value="EF_TS_2"/>
    <property type="match status" value="1"/>
</dbReference>
<reference key="1">
    <citation type="journal article" date="2006" name="J. Bacteriol.">
        <title>Chromosome rearrangement and diversification of Francisella tularensis revealed by the type B (OSU18) genome sequence.</title>
        <authorList>
            <person name="Petrosino J.F."/>
            <person name="Xiang Q."/>
            <person name="Karpathy S.E."/>
            <person name="Jiang H."/>
            <person name="Yerrapragada S."/>
            <person name="Liu Y."/>
            <person name="Gioia J."/>
            <person name="Hemphill L."/>
            <person name="Gonzalez A."/>
            <person name="Raghavan T.M."/>
            <person name="Uzman A."/>
            <person name="Fox G.E."/>
            <person name="Highlander S."/>
            <person name="Reichard M."/>
            <person name="Morton R.J."/>
            <person name="Clinkenbeard K.D."/>
            <person name="Weinstock G.M."/>
        </authorList>
    </citation>
    <scope>NUCLEOTIDE SEQUENCE [LARGE SCALE GENOMIC DNA]</scope>
    <source>
        <strain>OSU18</strain>
    </source>
</reference>
<gene>
    <name evidence="1" type="primary">tsf</name>
    <name type="ordered locus">FTH_0220</name>
</gene>
<evidence type="ECO:0000255" key="1">
    <source>
        <dbReference type="HAMAP-Rule" id="MF_00050"/>
    </source>
</evidence>
<comment type="function">
    <text evidence="1">Associates with the EF-Tu.GDP complex and induces the exchange of GDP to GTP. It remains bound to the aminoacyl-tRNA.EF-Tu.GTP complex up to the GTP hydrolysis stage on the ribosome.</text>
</comment>
<comment type="subcellular location">
    <subcellularLocation>
        <location evidence="1">Cytoplasm</location>
    </subcellularLocation>
</comment>
<comment type="similarity">
    <text evidence="1">Belongs to the EF-Ts family.</text>
</comment>
<accession>Q0BNT8</accession>
<protein>
    <recommendedName>
        <fullName evidence="1">Elongation factor Ts</fullName>
        <shortName evidence="1">EF-Ts</shortName>
    </recommendedName>
</protein>
<name>EFTS_FRATO</name>
<organism>
    <name type="scientific">Francisella tularensis subsp. holarctica (strain OSU18)</name>
    <dbReference type="NCBI Taxonomy" id="393011"/>
    <lineage>
        <taxon>Bacteria</taxon>
        <taxon>Pseudomonadati</taxon>
        <taxon>Pseudomonadota</taxon>
        <taxon>Gammaproteobacteria</taxon>
        <taxon>Thiotrichales</taxon>
        <taxon>Francisellaceae</taxon>
        <taxon>Francisella</taxon>
    </lineage>
</organism>
<keyword id="KW-0963">Cytoplasm</keyword>
<keyword id="KW-0251">Elongation factor</keyword>
<keyword id="KW-0648">Protein biosynthesis</keyword>
<proteinExistence type="inferred from homology"/>
<feature type="chain" id="PRO_1000006097" description="Elongation factor Ts">
    <location>
        <begin position="1"/>
        <end position="289"/>
    </location>
</feature>
<feature type="region of interest" description="Involved in Mg(2+) ion dislocation from EF-Tu" evidence="1">
    <location>
        <begin position="80"/>
        <end position="83"/>
    </location>
</feature>
<sequence>MSNISAKLVKELRERTGAGMMECKKALVAAAGDIEKAAEEMRISGQAKADKKASRVAAEGVIEVYAADGRAILLEINSETDFVARDETFKKFAQEAVKAAHAANAKTIEEVLAAKTSNGETVEEARKSLIAKIGENIQVRRVKTVEAETLGAYIHGSKIGVVAALEGGDEDLAKDVAMHVAAANPMVVSGDQVPADVVAKEKEIFTAQAKESGKPAEIIEKMIVGRIRKFLDEVALLGQDFVKDPAIKVEKLVKDKGAKVVNFIRLDVGEGIEKKEEDFAAEVMSQIKG</sequence>